<proteinExistence type="evidence at protein level"/>
<keyword id="KW-0378">Hydrolase</keyword>
<keyword id="KW-0460">Magnesium</keyword>
<keyword id="KW-0479">Metal-binding</keyword>
<keyword id="KW-1185">Reference proteome</keyword>
<keyword id="KW-0346">Stress response</keyword>
<feature type="chain" id="PRO_0000363400" description="3'(2'),5'-bisphosphate nucleotidase">
    <location>
        <begin position="1"/>
        <end position="352"/>
    </location>
</feature>
<feature type="active site" description="Proton acceptor" evidence="2">
    <location>
        <position position="45"/>
    </location>
</feature>
<feature type="active site" description="Proton acceptor" evidence="2">
    <location>
        <position position="138"/>
    </location>
</feature>
<feature type="binding site" evidence="2">
    <location>
        <position position="68"/>
    </location>
    <ligand>
        <name>Mg(2+)</name>
        <dbReference type="ChEBI" id="CHEBI:18420"/>
        <label>1</label>
    </ligand>
</feature>
<feature type="binding site" evidence="2">
    <location>
        <position position="68"/>
    </location>
    <ligand>
        <name>Mg(2+)</name>
        <dbReference type="ChEBI" id="CHEBI:18420"/>
        <label>3</label>
    </ligand>
</feature>
<feature type="binding site" evidence="2">
    <location>
        <position position="133"/>
    </location>
    <ligand>
        <name>Mg(2+)</name>
        <dbReference type="ChEBI" id="CHEBI:18420"/>
        <label>1</label>
    </ligand>
</feature>
<feature type="binding site" evidence="2">
    <location>
        <position position="133"/>
    </location>
    <ligand>
        <name>Mg(2+)</name>
        <dbReference type="ChEBI" id="CHEBI:18420"/>
        <label>2</label>
    </ligand>
</feature>
<feature type="binding site" evidence="2">
    <location>
        <position position="135"/>
    </location>
    <ligand>
        <name>Mg(2+)</name>
        <dbReference type="ChEBI" id="CHEBI:18420"/>
        <label>1</label>
    </ligand>
</feature>
<feature type="binding site" evidence="2">
    <location>
        <position position="136"/>
    </location>
    <ligand>
        <name>Mg(2+)</name>
        <dbReference type="ChEBI" id="CHEBI:18420"/>
        <label>2</label>
    </ligand>
</feature>
<feature type="binding site" evidence="2">
    <location>
        <position position="138"/>
    </location>
    <ligand>
        <name>adenosine 3',5'-bisphosphate</name>
        <dbReference type="ChEBI" id="CHEBI:58343"/>
    </ligand>
</feature>
<feature type="binding site" evidence="2">
    <location>
        <position position="240"/>
    </location>
    <ligand>
        <name>adenosine 3',5'-bisphosphate</name>
        <dbReference type="ChEBI" id="CHEBI:58343"/>
    </ligand>
</feature>
<feature type="binding site" evidence="2">
    <location>
        <position position="240"/>
    </location>
    <ligand>
        <name>AMP</name>
        <dbReference type="ChEBI" id="CHEBI:456215"/>
    </ligand>
</feature>
<feature type="binding site" evidence="2">
    <location>
        <position position="264"/>
    </location>
    <ligand>
        <name>adenosine 3',5'-bisphosphate</name>
        <dbReference type="ChEBI" id="CHEBI:58343"/>
    </ligand>
</feature>
<feature type="binding site" evidence="2">
    <location>
        <position position="264"/>
    </location>
    <ligand>
        <name>AMP</name>
        <dbReference type="ChEBI" id="CHEBI:456215"/>
    </ligand>
</feature>
<feature type="binding site" evidence="2">
    <location>
        <position position="267"/>
    </location>
    <ligand>
        <name>adenosine 3',5'-bisphosphate</name>
        <dbReference type="ChEBI" id="CHEBI:58343"/>
    </ligand>
</feature>
<feature type="binding site" evidence="2">
    <location>
        <position position="267"/>
    </location>
    <ligand>
        <name>AMP</name>
        <dbReference type="ChEBI" id="CHEBI:456215"/>
    </ligand>
</feature>
<feature type="binding site" evidence="2">
    <location>
        <position position="281"/>
    </location>
    <ligand>
        <name>adenosine 3',5'-bisphosphate</name>
        <dbReference type="ChEBI" id="CHEBI:58343"/>
    </ligand>
</feature>
<feature type="binding site" evidence="2">
    <location>
        <position position="281"/>
    </location>
    <ligand>
        <name>AMP</name>
        <dbReference type="ChEBI" id="CHEBI:456215"/>
    </ligand>
</feature>
<feature type="binding site" evidence="2">
    <location>
        <position position="294"/>
    </location>
    <ligand>
        <name>adenosine 3',5'-bisphosphate</name>
        <dbReference type="ChEBI" id="CHEBI:58343"/>
    </ligand>
</feature>
<feature type="binding site" evidence="2">
    <location>
        <position position="294"/>
    </location>
    <ligand>
        <name>AMP</name>
        <dbReference type="ChEBI" id="CHEBI:456215"/>
    </ligand>
</feature>
<feature type="binding site" evidence="2">
    <location>
        <position position="294"/>
    </location>
    <ligand>
        <name>Mg(2+)</name>
        <dbReference type="ChEBI" id="CHEBI:18420"/>
        <label>2</label>
    </ligand>
</feature>
<accession>Q5BCG1</accession>
<accession>C8VPC6</accession>
<sequence length="352" mass="37167">MSYERERYIAELAVQRATILTQKVFNEKAKGTVSKDDKSPVTIGDFGAQALIIQAIRKNFPNDEIVAEEEASTLREDKALSAEIWRLVKDIKLEDAESNELLGGSLPSEEAMLDIIDEGKSAGGPKGRIWALDPIDGTKGFLRGGQYAVCLGLLEDGDVKVGAIGCPNLPVDDAATISSSIGVDQNSGAGNGVLFSAIKGAGSVSRPLTSGARAESKSISMRPVPDIAQAVFCEGVEAGHSAQGDNAAVAQLLGITSPSVRLDSQAKYCSIARGAGDIYLRLPVKKDYQEKIWDHAAGDLIVREAGGQVTDIYGQTLDFSKGRTLAANKGVVAAPKAIQDEVISAVKKVLKL</sequence>
<name>DPNP_EMENI</name>
<comment type="function">
    <text evidence="1 2">Phosphatase that converts adenosine 3'-phosphate 5'-phosphosulfate (PAPS) to adenosine 5'-phosphosulfate (APS) and 3'(2')-phosphoadenosine 5'-phosphate (PAP) to AMP. May regulate the flux of sulfur in the sulfur-activation pathway by converting PAPS to APS (By similarity). Involved in osmoadaptation.</text>
</comment>
<comment type="catalytic activity">
    <reaction evidence="2">
        <text>3'-phosphoadenylyl sulfate + H2O = adenosine 5'-phosphosulfate + phosphate</text>
        <dbReference type="Rhea" id="RHEA:77639"/>
        <dbReference type="ChEBI" id="CHEBI:15377"/>
        <dbReference type="ChEBI" id="CHEBI:43474"/>
        <dbReference type="ChEBI" id="CHEBI:58243"/>
        <dbReference type="ChEBI" id="CHEBI:58339"/>
        <dbReference type="EC" id="3.1.3.7"/>
    </reaction>
    <physiologicalReaction direction="left-to-right" evidence="2">
        <dbReference type="Rhea" id="RHEA:77640"/>
    </physiologicalReaction>
</comment>
<comment type="catalytic activity">
    <reaction evidence="2">
        <text>adenosine 3',5'-bisphosphate + H2O = AMP + phosphate</text>
        <dbReference type="Rhea" id="RHEA:10040"/>
        <dbReference type="ChEBI" id="CHEBI:15377"/>
        <dbReference type="ChEBI" id="CHEBI:43474"/>
        <dbReference type="ChEBI" id="CHEBI:58343"/>
        <dbReference type="ChEBI" id="CHEBI:456215"/>
        <dbReference type="EC" id="3.1.3.7"/>
    </reaction>
    <physiologicalReaction direction="left-to-right" evidence="2">
        <dbReference type="Rhea" id="RHEA:10041"/>
    </physiologicalReaction>
</comment>
<comment type="catalytic activity">
    <reaction evidence="2">
        <text>adenosine 2',5'-bisphosphate + H2O = AMP + phosphate</text>
        <dbReference type="Rhea" id="RHEA:77643"/>
        <dbReference type="ChEBI" id="CHEBI:15377"/>
        <dbReference type="ChEBI" id="CHEBI:43474"/>
        <dbReference type="ChEBI" id="CHEBI:194156"/>
        <dbReference type="ChEBI" id="CHEBI:456215"/>
        <dbReference type="EC" id="3.1.3.7"/>
    </reaction>
    <physiologicalReaction direction="left-to-right" evidence="2">
        <dbReference type="Rhea" id="RHEA:77644"/>
    </physiologicalReaction>
</comment>
<comment type="cofactor">
    <cofactor evidence="2">
        <name>Mg(2+)</name>
        <dbReference type="ChEBI" id="CHEBI:18420"/>
    </cofactor>
    <text evidence="2">Binds 3 Mg(2+) ions per subunit.</text>
</comment>
<comment type="induction">
    <text evidence="3">Down-regulated when grown with elevated levels of potassium chloride.</text>
</comment>
<comment type="similarity">
    <text evidence="4">Belongs to the inositol monophosphatase superfamily.</text>
</comment>
<comment type="sequence caution" evidence="4">
    <conflict type="erroneous initiation">
        <sequence resource="EMBL-CDS" id="CBF85527"/>
    </conflict>
    <text>Extended N-terminus.</text>
</comment>
<gene>
    <name type="ORF">AN1769</name>
</gene>
<organism>
    <name type="scientific">Emericella nidulans (strain FGSC A4 / ATCC 38163 / CBS 112.46 / NRRL 194 / M139)</name>
    <name type="common">Aspergillus nidulans</name>
    <dbReference type="NCBI Taxonomy" id="227321"/>
    <lineage>
        <taxon>Eukaryota</taxon>
        <taxon>Fungi</taxon>
        <taxon>Dikarya</taxon>
        <taxon>Ascomycota</taxon>
        <taxon>Pezizomycotina</taxon>
        <taxon>Eurotiomycetes</taxon>
        <taxon>Eurotiomycetidae</taxon>
        <taxon>Eurotiales</taxon>
        <taxon>Aspergillaceae</taxon>
        <taxon>Aspergillus</taxon>
        <taxon>Aspergillus subgen. Nidulantes</taxon>
    </lineage>
</organism>
<reference key="1">
    <citation type="journal article" date="2005" name="Nature">
        <title>Sequencing of Aspergillus nidulans and comparative analysis with A. fumigatus and A. oryzae.</title>
        <authorList>
            <person name="Galagan J.E."/>
            <person name="Calvo S.E."/>
            <person name="Cuomo C."/>
            <person name="Ma L.-J."/>
            <person name="Wortman J.R."/>
            <person name="Batzoglou S."/>
            <person name="Lee S.-I."/>
            <person name="Bastuerkmen M."/>
            <person name="Spevak C.C."/>
            <person name="Clutterbuck J."/>
            <person name="Kapitonov V."/>
            <person name="Jurka J."/>
            <person name="Scazzocchio C."/>
            <person name="Farman M.L."/>
            <person name="Butler J."/>
            <person name="Purcell S."/>
            <person name="Harris S."/>
            <person name="Braus G.H."/>
            <person name="Draht O."/>
            <person name="Busch S."/>
            <person name="D'Enfert C."/>
            <person name="Bouchier C."/>
            <person name="Goldman G.H."/>
            <person name="Bell-Pedersen D."/>
            <person name="Griffiths-Jones S."/>
            <person name="Doonan J.H."/>
            <person name="Yu J."/>
            <person name="Vienken K."/>
            <person name="Pain A."/>
            <person name="Freitag M."/>
            <person name="Selker E.U."/>
            <person name="Archer D.B."/>
            <person name="Penalva M.A."/>
            <person name="Oakley B.R."/>
            <person name="Momany M."/>
            <person name="Tanaka T."/>
            <person name="Kumagai T."/>
            <person name="Asai K."/>
            <person name="Machida M."/>
            <person name="Nierman W.C."/>
            <person name="Denning D.W."/>
            <person name="Caddick M.X."/>
            <person name="Hynes M."/>
            <person name="Paoletti M."/>
            <person name="Fischer R."/>
            <person name="Miller B.L."/>
            <person name="Dyer P.S."/>
            <person name="Sachs M.S."/>
            <person name="Osmani S.A."/>
            <person name="Birren B.W."/>
        </authorList>
    </citation>
    <scope>NUCLEOTIDE SEQUENCE [LARGE SCALE GENOMIC DNA]</scope>
    <source>
        <strain>FGSC A4 / ATCC 38163 / CBS 112.46 / NRRL 194 / M139</strain>
    </source>
</reference>
<reference key="2">
    <citation type="journal article" date="2009" name="Fungal Genet. Biol.">
        <title>The 2008 update of the Aspergillus nidulans genome annotation: a community effort.</title>
        <authorList>
            <person name="Wortman J.R."/>
            <person name="Gilsenan J.M."/>
            <person name="Joardar V."/>
            <person name="Deegan J."/>
            <person name="Clutterbuck J."/>
            <person name="Andersen M.R."/>
            <person name="Archer D."/>
            <person name="Bencina M."/>
            <person name="Braus G."/>
            <person name="Coutinho P."/>
            <person name="von Dohren H."/>
            <person name="Doonan J."/>
            <person name="Driessen A.J."/>
            <person name="Durek P."/>
            <person name="Espeso E."/>
            <person name="Fekete E."/>
            <person name="Flipphi M."/>
            <person name="Estrada C.G."/>
            <person name="Geysens S."/>
            <person name="Goldman G."/>
            <person name="de Groot P.W."/>
            <person name="Hansen K."/>
            <person name="Harris S.D."/>
            <person name="Heinekamp T."/>
            <person name="Helmstaedt K."/>
            <person name="Henrissat B."/>
            <person name="Hofmann G."/>
            <person name="Homan T."/>
            <person name="Horio T."/>
            <person name="Horiuchi H."/>
            <person name="James S."/>
            <person name="Jones M."/>
            <person name="Karaffa L."/>
            <person name="Karanyi Z."/>
            <person name="Kato M."/>
            <person name="Keller N."/>
            <person name="Kelly D.E."/>
            <person name="Kiel J.A."/>
            <person name="Kim J.M."/>
            <person name="van der Klei I.J."/>
            <person name="Klis F.M."/>
            <person name="Kovalchuk A."/>
            <person name="Krasevec N."/>
            <person name="Kubicek C.P."/>
            <person name="Liu B."/>
            <person name="Maccabe A."/>
            <person name="Meyer V."/>
            <person name="Mirabito P."/>
            <person name="Miskei M."/>
            <person name="Mos M."/>
            <person name="Mullins J."/>
            <person name="Nelson D.R."/>
            <person name="Nielsen J."/>
            <person name="Oakley B.R."/>
            <person name="Osmani S.A."/>
            <person name="Pakula T."/>
            <person name="Paszewski A."/>
            <person name="Paulsen I."/>
            <person name="Pilsyk S."/>
            <person name="Pocsi I."/>
            <person name="Punt P.J."/>
            <person name="Ram A.F."/>
            <person name="Ren Q."/>
            <person name="Robellet X."/>
            <person name="Robson G."/>
            <person name="Seiboth B."/>
            <person name="van Solingen P."/>
            <person name="Specht T."/>
            <person name="Sun J."/>
            <person name="Taheri-Talesh N."/>
            <person name="Takeshita N."/>
            <person name="Ussery D."/>
            <person name="vanKuyk P.A."/>
            <person name="Visser H."/>
            <person name="van de Vondervoort P.J."/>
            <person name="de Vries R.P."/>
            <person name="Walton J."/>
            <person name="Xiang X."/>
            <person name="Xiong Y."/>
            <person name="Zeng A.P."/>
            <person name="Brandt B.W."/>
            <person name="Cornell M.J."/>
            <person name="van den Hondel C.A."/>
            <person name="Visser J."/>
            <person name="Oliver S.G."/>
            <person name="Turner G."/>
        </authorList>
    </citation>
    <scope>GENOME REANNOTATION</scope>
    <source>
        <strain>FGSC A4 / ATCC 38163 / CBS 112.46 / NRRL 194 / M139</strain>
    </source>
</reference>
<reference key="3">
    <citation type="journal article" date="2007" name="Fungal Genet. Biol.">
        <title>Proteome map of Aspergillus nidulans during osmoadaptation.</title>
        <authorList>
            <person name="Kim Y."/>
            <person name="Nandakumar M.P."/>
            <person name="Marten M.R."/>
        </authorList>
    </citation>
    <scope>INDUCTION</scope>
    <scope>IDENTIFICATION BY MASS SPECTROMETRY</scope>
</reference>
<evidence type="ECO:0000250" key="1"/>
<evidence type="ECO:0000250" key="2">
    <source>
        <dbReference type="UniProtKB" id="P32179"/>
    </source>
</evidence>
<evidence type="ECO:0000269" key="3">
    <source>
    </source>
</evidence>
<evidence type="ECO:0000305" key="4"/>
<dbReference type="EC" id="3.1.3.7" evidence="2"/>
<dbReference type="EMBL" id="AACD01000028">
    <property type="protein sequence ID" value="EAA63945.1"/>
    <property type="molecule type" value="Genomic_DNA"/>
</dbReference>
<dbReference type="EMBL" id="BN001307">
    <property type="protein sequence ID" value="CBF85527.1"/>
    <property type="status" value="ALT_INIT"/>
    <property type="molecule type" value="Genomic_DNA"/>
</dbReference>
<dbReference type="RefSeq" id="XP_659373.1">
    <property type="nucleotide sequence ID" value="XM_654281.1"/>
</dbReference>
<dbReference type="SMR" id="Q5BCG1"/>
<dbReference type="FunCoup" id="Q5BCG1">
    <property type="interactions" value="72"/>
</dbReference>
<dbReference type="STRING" id="227321.Q5BCG1"/>
<dbReference type="KEGG" id="ani:ANIA_01769"/>
<dbReference type="eggNOG" id="KOG1528">
    <property type="taxonomic scope" value="Eukaryota"/>
</dbReference>
<dbReference type="HOGENOM" id="CLU_033446_1_1_1"/>
<dbReference type="InParanoid" id="Q5BCG1"/>
<dbReference type="OrthoDB" id="411145at2759"/>
<dbReference type="Proteomes" id="UP000000560">
    <property type="component" value="Chromosome VII"/>
</dbReference>
<dbReference type="GO" id="GO:0008441">
    <property type="term" value="F:3'(2'),5'-bisphosphate nucleotidase activity"/>
    <property type="evidence" value="ECO:0000318"/>
    <property type="project" value="GO_Central"/>
</dbReference>
<dbReference type="GO" id="GO:0046872">
    <property type="term" value="F:metal ion binding"/>
    <property type="evidence" value="ECO:0007669"/>
    <property type="project" value="UniProtKB-KW"/>
</dbReference>
<dbReference type="GO" id="GO:0046854">
    <property type="term" value="P:phosphatidylinositol phosphate biosynthetic process"/>
    <property type="evidence" value="ECO:0007669"/>
    <property type="project" value="InterPro"/>
</dbReference>
<dbReference type="GO" id="GO:0000103">
    <property type="term" value="P:sulfate assimilation"/>
    <property type="evidence" value="ECO:0000318"/>
    <property type="project" value="GO_Central"/>
</dbReference>
<dbReference type="CDD" id="cd01517">
    <property type="entry name" value="PAP_phosphatase"/>
    <property type="match status" value="1"/>
</dbReference>
<dbReference type="FunFam" id="3.30.540.10:FF:000015">
    <property type="entry name" value="3',5'-bisphosphate nucleotidase"/>
    <property type="match status" value="1"/>
</dbReference>
<dbReference type="FunFam" id="3.40.190.80:FF:000003">
    <property type="entry name" value="PAP-specific phosphatase HAL2-like"/>
    <property type="match status" value="1"/>
</dbReference>
<dbReference type="Gene3D" id="3.40.190.80">
    <property type="match status" value="1"/>
</dbReference>
<dbReference type="Gene3D" id="3.30.540.10">
    <property type="entry name" value="Fructose-1,6-Bisphosphatase, subunit A, domain 1"/>
    <property type="match status" value="1"/>
</dbReference>
<dbReference type="InterPro" id="IPR006239">
    <property type="entry name" value="DPNP"/>
</dbReference>
<dbReference type="InterPro" id="IPR020583">
    <property type="entry name" value="Inositol_monoP_metal-BS"/>
</dbReference>
<dbReference type="InterPro" id="IPR051090">
    <property type="entry name" value="Inositol_monoP_superfamily"/>
</dbReference>
<dbReference type="InterPro" id="IPR000760">
    <property type="entry name" value="Inositol_monophosphatase-like"/>
</dbReference>
<dbReference type="InterPro" id="IPR020550">
    <property type="entry name" value="Inositol_monophosphatase_CS"/>
</dbReference>
<dbReference type="NCBIfam" id="TIGR01330">
    <property type="entry name" value="bisphos_HAL2"/>
    <property type="match status" value="1"/>
</dbReference>
<dbReference type="PANTHER" id="PTHR43200:SF6">
    <property type="entry name" value="3'(2'),5'-BISPHOSPHATE NUCLEOTIDASE"/>
    <property type="match status" value="1"/>
</dbReference>
<dbReference type="PANTHER" id="PTHR43200">
    <property type="entry name" value="PHOSPHATASE"/>
    <property type="match status" value="1"/>
</dbReference>
<dbReference type="Pfam" id="PF00459">
    <property type="entry name" value="Inositol_P"/>
    <property type="match status" value="1"/>
</dbReference>
<dbReference type="SUPFAM" id="SSF56655">
    <property type="entry name" value="Carbohydrate phosphatase"/>
    <property type="match status" value="1"/>
</dbReference>
<dbReference type="PROSITE" id="PS00629">
    <property type="entry name" value="IMP_1"/>
    <property type="match status" value="1"/>
</dbReference>
<dbReference type="PROSITE" id="PS00630">
    <property type="entry name" value="IMP_2"/>
    <property type="match status" value="1"/>
</dbReference>
<protein>
    <recommendedName>
        <fullName>3'(2'),5'-bisphosphate nucleotidase</fullName>
        <ecNumber evidence="2">3.1.3.7</ecNumber>
    </recommendedName>
    <alternativeName>
        <fullName>3'(2'),5-bisphosphonucleoside 3'(2')-phosphohydrolase</fullName>
    </alternativeName>
    <alternativeName>
        <fullName>DPNPase</fullName>
    </alternativeName>
</protein>